<comment type="function">
    <text evidence="1">One of the primary rRNA binding proteins, it binds directly to 16S rRNA central domain where it helps coordinate assembly of the platform of the 30S subunit.</text>
</comment>
<comment type="subunit">
    <text evidence="1">Part of the 30S ribosomal subunit. Contacts proteins S5 and S12.</text>
</comment>
<comment type="similarity">
    <text evidence="1">Belongs to the universal ribosomal protein uS8 family.</text>
</comment>
<protein>
    <recommendedName>
        <fullName evidence="1">Small ribosomal subunit protein uS8</fullName>
    </recommendedName>
    <alternativeName>
        <fullName evidence="2">30S ribosomal protein S8</fullName>
    </alternativeName>
</protein>
<keyword id="KW-0002">3D-structure</keyword>
<keyword id="KW-1185">Reference proteome</keyword>
<keyword id="KW-0687">Ribonucleoprotein</keyword>
<keyword id="KW-0689">Ribosomal protein</keyword>
<keyword id="KW-0694">RNA-binding</keyword>
<keyword id="KW-0699">rRNA-binding</keyword>
<accession>P9WH27</accession>
<accession>L0T7I4</accession>
<accession>P66625</accession>
<accession>P95066</accession>
<sequence>MTMTDPIADFLTRLRNANSAYHDEVSLPHSKLKANIAQILKNEGYISDFRTEDARVGKSLVIQLKYGPSRERSIAGLRRVSKPGLRVYAKSTNLPRVLGGLGVAIISTSSGLLTDRQAARQGVGGEVLAYVW</sequence>
<proteinExistence type="evidence at protein level"/>
<gene>
    <name evidence="1" type="primary">rpsH</name>
    <name type="ordered locus">Rv0718</name>
    <name type="ORF">MTCY210.37</name>
</gene>
<name>RS8_MYCTU</name>
<feature type="chain" id="PRO_0000126448" description="Small ribosomal subunit protein uS8">
    <location>
        <begin position="1"/>
        <end position="132"/>
    </location>
</feature>
<evidence type="ECO:0000255" key="1">
    <source>
        <dbReference type="HAMAP-Rule" id="MF_01302"/>
    </source>
</evidence>
<evidence type="ECO:0000305" key="2"/>
<reference key="1">
    <citation type="journal article" date="1998" name="Nature">
        <title>Deciphering the biology of Mycobacterium tuberculosis from the complete genome sequence.</title>
        <authorList>
            <person name="Cole S.T."/>
            <person name="Brosch R."/>
            <person name="Parkhill J."/>
            <person name="Garnier T."/>
            <person name="Churcher C.M."/>
            <person name="Harris D.E."/>
            <person name="Gordon S.V."/>
            <person name="Eiglmeier K."/>
            <person name="Gas S."/>
            <person name="Barry C.E. III"/>
            <person name="Tekaia F."/>
            <person name="Badcock K."/>
            <person name="Basham D."/>
            <person name="Brown D."/>
            <person name="Chillingworth T."/>
            <person name="Connor R."/>
            <person name="Davies R.M."/>
            <person name="Devlin K."/>
            <person name="Feltwell T."/>
            <person name="Gentles S."/>
            <person name="Hamlin N."/>
            <person name="Holroyd S."/>
            <person name="Hornsby T."/>
            <person name="Jagels K."/>
            <person name="Krogh A."/>
            <person name="McLean J."/>
            <person name="Moule S."/>
            <person name="Murphy L.D."/>
            <person name="Oliver S."/>
            <person name="Osborne J."/>
            <person name="Quail M.A."/>
            <person name="Rajandream M.A."/>
            <person name="Rogers J."/>
            <person name="Rutter S."/>
            <person name="Seeger K."/>
            <person name="Skelton S."/>
            <person name="Squares S."/>
            <person name="Squares R."/>
            <person name="Sulston J.E."/>
            <person name="Taylor K."/>
            <person name="Whitehead S."/>
            <person name="Barrell B.G."/>
        </authorList>
    </citation>
    <scope>NUCLEOTIDE SEQUENCE [LARGE SCALE GENOMIC DNA]</scope>
    <source>
        <strain>ATCC 25618 / H37Rv</strain>
    </source>
</reference>
<reference key="2">
    <citation type="journal article" date="2011" name="Mol. Cell. Proteomics">
        <title>Proteogenomic analysis of Mycobacterium tuberculosis by high resolution mass spectrometry.</title>
        <authorList>
            <person name="Kelkar D.S."/>
            <person name="Kumar D."/>
            <person name="Kumar P."/>
            <person name="Balakrishnan L."/>
            <person name="Muthusamy B."/>
            <person name="Yadav A.K."/>
            <person name="Shrivastava P."/>
            <person name="Marimuthu A."/>
            <person name="Anand S."/>
            <person name="Sundaram H."/>
            <person name="Kingsbury R."/>
            <person name="Harsha H.C."/>
            <person name="Nair B."/>
            <person name="Prasad T.S."/>
            <person name="Chauhan D.S."/>
            <person name="Katoch K."/>
            <person name="Katoch V.M."/>
            <person name="Kumar P."/>
            <person name="Chaerkady R."/>
            <person name="Ramachandran S."/>
            <person name="Dash D."/>
            <person name="Pandey A."/>
        </authorList>
    </citation>
    <scope>IDENTIFICATION BY MASS SPECTROMETRY [LARGE SCALE ANALYSIS]</scope>
    <source>
        <strain>ATCC 25618 / H37Rv</strain>
    </source>
</reference>
<organism>
    <name type="scientific">Mycobacterium tuberculosis (strain ATCC 25618 / H37Rv)</name>
    <dbReference type="NCBI Taxonomy" id="83332"/>
    <lineage>
        <taxon>Bacteria</taxon>
        <taxon>Bacillati</taxon>
        <taxon>Actinomycetota</taxon>
        <taxon>Actinomycetes</taxon>
        <taxon>Mycobacteriales</taxon>
        <taxon>Mycobacteriaceae</taxon>
        <taxon>Mycobacterium</taxon>
        <taxon>Mycobacterium tuberculosis complex</taxon>
    </lineage>
</organism>
<dbReference type="EMBL" id="AL123456">
    <property type="protein sequence ID" value="CCP43462.1"/>
    <property type="molecule type" value="Genomic_DNA"/>
</dbReference>
<dbReference type="PIR" id="A70644">
    <property type="entry name" value="A70644"/>
</dbReference>
<dbReference type="RefSeq" id="NP_215232.1">
    <property type="nucleotide sequence ID" value="NC_000962.3"/>
</dbReference>
<dbReference type="RefSeq" id="WP_003403669.1">
    <property type="nucleotide sequence ID" value="NZ_NVQJ01000007.1"/>
</dbReference>
<dbReference type="PDB" id="5V93">
    <property type="method" value="EM"/>
    <property type="resolution" value="4.00 A"/>
    <property type="chains" value="h=1-132"/>
</dbReference>
<dbReference type="PDB" id="7KGB">
    <property type="method" value="EM"/>
    <property type="resolution" value="2.70 A"/>
    <property type="chains" value="h=1-132"/>
</dbReference>
<dbReference type="PDB" id="7MSC">
    <property type="method" value="EM"/>
    <property type="resolution" value="2.97 A"/>
    <property type="chains" value="h=1-132"/>
</dbReference>
<dbReference type="PDB" id="7MSH">
    <property type="method" value="EM"/>
    <property type="resolution" value="3.23 A"/>
    <property type="chains" value="h=1-132"/>
</dbReference>
<dbReference type="PDB" id="7MSM">
    <property type="method" value="EM"/>
    <property type="resolution" value="2.79 A"/>
    <property type="chains" value="h=1-132"/>
</dbReference>
<dbReference type="PDB" id="7MSZ">
    <property type="method" value="EM"/>
    <property type="resolution" value="3.10 A"/>
    <property type="chains" value="h=1-132"/>
</dbReference>
<dbReference type="PDB" id="7MT2">
    <property type="method" value="EM"/>
    <property type="resolution" value="2.76 A"/>
    <property type="chains" value="h=1-132"/>
</dbReference>
<dbReference type="PDB" id="7MT3">
    <property type="method" value="EM"/>
    <property type="resolution" value="2.80 A"/>
    <property type="chains" value="h=1-132"/>
</dbReference>
<dbReference type="PDB" id="7MT7">
    <property type="method" value="EM"/>
    <property type="resolution" value="2.71 A"/>
    <property type="chains" value="h=1-132"/>
</dbReference>
<dbReference type="PDB" id="7SFR">
    <property type="method" value="EM"/>
    <property type="resolution" value="2.60 A"/>
    <property type="chains" value="h=1-132"/>
</dbReference>
<dbReference type="PDBsum" id="5V93"/>
<dbReference type="PDBsum" id="7KGB"/>
<dbReference type="PDBsum" id="7MSC"/>
<dbReference type="PDBsum" id="7MSH"/>
<dbReference type="PDBsum" id="7MSM"/>
<dbReference type="PDBsum" id="7MSZ"/>
<dbReference type="PDBsum" id="7MT2"/>
<dbReference type="PDBsum" id="7MT3"/>
<dbReference type="PDBsum" id="7MT7"/>
<dbReference type="PDBsum" id="7SFR"/>
<dbReference type="EMDB" id="EMD-22865"/>
<dbReference type="EMDB" id="EMD-23961"/>
<dbReference type="EMDB" id="EMD-23962"/>
<dbReference type="EMDB" id="EMD-23969"/>
<dbReference type="EMDB" id="EMD-23972"/>
<dbReference type="EMDB" id="EMD-23974"/>
<dbReference type="EMDB" id="EMD-23975"/>
<dbReference type="EMDB" id="EMD-23976"/>
<dbReference type="EMDB" id="EMD-8645"/>
<dbReference type="SMR" id="P9WH27"/>
<dbReference type="FunCoup" id="P9WH27">
    <property type="interactions" value="286"/>
</dbReference>
<dbReference type="STRING" id="83332.Rv0718"/>
<dbReference type="PaxDb" id="83332-Rv0718"/>
<dbReference type="DNASU" id="888424"/>
<dbReference type="GeneID" id="45424683"/>
<dbReference type="GeneID" id="888424"/>
<dbReference type="KEGG" id="mtu:Rv0718"/>
<dbReference type="KEGG" id="mtv:RVBD_0718"/>
<dbReference type="TubercuList" id="Rv0718"/>
<dbReference type="eggNOG" id="COG0096">
    <property type="taxonomic scope" value="Bacteria"/>
</dbReference>
<dbReference type="InParanoid" id="P9WH27"/>
<dbReference type="OrthoDB" id="9802617at2"/>
<dbReference type="PhylomeDB" id="P9WH27"/>
<dbReference type="PRO" id="PR:P9WH27"/>
<dbReference type="Proteomes" id="UP000001584">
    <property type="component" value="Chromosome"/>
</dbReference>
<dbReference type="GO" id="GO:0022627">
    <property type="term" value="C:cytosolic small ribosomal subunit"/>
    <property type="evidence" value="ECO:0000318"/>
    <property type="project" value="GO_Central"/>
</dbReference>
<dbReference type="GO" id="GO:0019843">
    <property type="term" value="F:rRNA binding"/>
    <property type="evidence" value="ECO:0007669"/>
    <property type="project" value="UniProtKB-UniRule"/>
</dbReference>
<dbReference type="GO" id="GO:0003735">
    <property type="term" value="F:structural constituent of ribosome"/>
    <property type="evidence" value="ECO:0000318"/>
    <property type="project" value="GO_Central"/>
</dbReference>
<dbReference type="GO" id="GO:0006412">
    <property type="term" value="P:translation"/>
    <property type="evidence" value="ECO:0007669"/>
    <property type="project" value="UniProtKB-UniRule"/>
</dbReference>
<dbReference type="FunFam" id="3.30.1370.30:FF:000002">
    <property type="entry name" value="30S ribosomal protein S8"/>
    <property type="match status" value="1"/>
</dbReference>
<dbReference type="FunFam" id="3.30.1490.10:FF:000001">
    <property type="entry name" value="30S ribosomal protein S8"/>
    <property type="match status" value="1"/>
</dbReference>
<dbReference type="Gene3D" id="3.30.1370.30">
    <property type="match status" value="1"/>
</dbReference>
<dbReference type="Gene3D" id="3.30.1490.10">
    <property type="match status" value="1"/>
</dbReference>
<dbReference type="HAMAP" id="MF_01302_B">
    <property type="entry name" value="Ribosomal_uS8_B"/>
    <property type="match status" value="1"/>
</dbReference>
<dbReference type="InterPro" id="IPR000630">
    <property type="entry name" value="Ribosomal_uS8"/>
</dbReference>
<dbReference type="InterPro" id="IPR047863">
    <property type="entry name" value="Ribosomal_uS8_CS"/>
</dbReference>
<dbReference type="InterPro" id="IPR035987">
    <property type="entry name" value="Ribosomal_uS8_sf"/>
</dbReference>
<dbReference type="NCBIfam" id="NF001109">
    <property type="entry name" value="PRK00136.1"/>
    <property type="match status" value="1"/>
</dbReference>
<dbReference type="PANTHER" id="PTHR11758">
    <property type="entry name" value="40S RIBOSOMAL PROTEIN S15A"/>
    <property type="match status" value="1"/>
</dbReference>
<dbReference type="Pfam" id="PF00410">
    <property type="entry name" value="Ribosomal_S8"/>
    <property type="match status" value="1"/>
</dbReference>
<dbReference type="SUPFAM" id="SSF56047">
    <property type="entry name" value="Ribosomal protein S8"/>
    <property type="match status" value="1"/>
</dbReference>
<dbReference type="PROSITE" id="PS00053">
    <property type="entry name" value="RIBOSOMAL_S8"/>
    <property type="match status" value="1"/>
</dbReference>